<protein>
    <recommendedName>
        <fullName>Snaclec agkicetin-C subunit beta</fullName>
    </recommendedName>
    <alternativeName>
        <fullName>Antithrombin A subunit B</fullName>
    </alternativeName>
</protein>
<evidence type="ECO:0000255" key="1">
    <source>
        <dbReference type="PROSITE-ProRule" id="PRU00040"/>
    </source>
</evidence>
<evidence type="ECO:0000269" key="2">
    <source>
    </source>
</evidence>
<evidence type="ECO:0000305" key="3"/>
<evidence type="ECO:0000305" key="4">
    <source>
    </source>
</evidence>
<feature type="signal peptide" evidence="2">
    <location>
        <begin position="1"/>
        <end position="23"/>
    </location>
</feature>
<feature type="chain" id="PRO_5000055287" description="Snaclec agkicetin-C subunit beta">
    <location>
        <begin position="24"/>
        <end position="146"/>
    </location>
</feature>
<feature type="domain" description="C-type lectin" evidence="1">
    <location>
        <begin position="32"/>
        <end position="143"/>
    </location>
</feature>
<feature type="disulfide bond" evidence="1">
    <location>
        <begin position="25"/>
        <end position="36"/>
    </location>
</feature>
<feature type="disulfide bond" evidence="1">
    <location>
        <begin position="53"/>
        <end position="142"/>
    </location>
</feature>
<feature type="disulfide bond" description="Interchain (with C-101 in subunit alpha)" evidence="1">
    <location>
        <position position="98"/>
    </location>
</feature>
<feature type="disulfide bond" evidence="1">
    <location>
        <begin position="119"/>
        <end position="134"/>
    </location>
</feature>
<keyword id="KW-0903">Direct protein sequencing</keyword>
<keyword id="KW-1015">Disulfide bond</keyword>
<keyword id="KW-1199">Hemostasis impairing toxin</keyword>
<keyword id="KW-1201">Platelet aggregation inhibiting toxin</keyword>
<keyword id="KW-0964">Secreted</keyword>
<keyword id="KW-0732">Signal</keyword>
<keyword id="KW-0800">Toxin</keyword>
<dbReference type="EMBL" id="AF102902">
    <property type="protein sequence ID" value="AAG42041.1"/>
    <property type="molecule type" value="mRNA"/>
</dbReference>
<dbReference type="EMBL" id="AY091755">
    <property type="protein sequence ID" value="AAM22784.1"/>
    <property type="molecule type" value="mRNA"/>
</dbReference>
<dbReference type="SMR" id="Q9DEA1"/>
<dbReference type="GO" id="GO:0005576">
    <property type="term" value="C:extracellular region"/>
    <property type="evidence" value="ECO:0007669"/>
    <property type="project" value="UniProtKB-SubCell"/>
</dbReference>
<dbReference type="GO" id="GO:0090729">
    <property type="term" value="F:toxin activity"/>
    <property type="evidence" value="ECO:0007669"/>
    <property type="project" value="UniProtKB-KW"/>
</dbReference>
<dbReference type="FunFam" id="3.10.100.10:FF:000087">
    <property type="entry name" value="Snaclec rhodocetin subunit delta"/>
    <property type="match status" value="1"/>
</dbReference>
<dbReference type="Gene3D" id="3.10.100.10">
    <property type="entry name" value="Mannose-Binding Protein A, subunit A"/>
    <property type="match status" value="1"/>
</dbReference>
<dbReference type="InterPro" id="IPR001304">
    <property type="entry name" value="C-type_lectin-like"/>
</dbReference>
<dbReference type="InterPro" id="IPR016186">
    <property type="entry name" value="C-type_lectin-like/link_sf"/>
</dbReference>
<dbReference type="InterPro" id="IPR050111">
    <property type="entry name" value="C-type_lectin/snaclec_domain"/>
</dbReference>
<dbReference type="InterPro" id="IPR018378">
    <property type="entry name" value="C-type_lectin_CS"/>
</dbReference>
<dbReference type="InterPro" id="IPR016187">
    <property type="entry name" value="CTDL_fold"/>
</dbReference>
<dbReference type="PANTHER" id="PTHR22803">
    <property type="entry name" value="MANNOSE, PHOSPHOLIPASE, LECTIN RECEPTOR RELATED"/>
    <property type="match status" value="1"/>
</dbReference>
<dbReference type="Pfam" id="PF00059">
    <property type="entry name" value="Lectin_C"/>
    <property type="match status" value="1"/>
</dbReference>
<dbReference type="SMART" id="SM00034">
    <property type="entry name" value="CLECT"/>
    <property type="match status" value="1"/>
</dbReference>
<dbReference type="SUPFAM" id="SSF56436">
    <property type="entry name" value="C-type lectin-like"/>
    <property type="match status" value="1"/>
</dbReference>
<dbReference type="PROSITE" id="PS00615">
    <property type="entry name" value="C_TYPE_LECTIN_1"/>
    <property type="match status" value="1"/>
</dbReference>
<dbReference type="PROSITE" id="PS50041">
    <property type="entry name" value="C_TYPE_LECTIN_2"/>
    <property type="match status" value="1"/>
</dbReference>
<organism>
    <name type="scientific">Deinagkistrodon acutus</name>
    <name type="common">Hundred-pace snake</name>
    <name type="synonym">Agkistrodon acutus</name>
    <dbReference type="NCBI Taxonomy" id="36307"/>
    <lineage>
        <taxon>Eukaryota</taxon>
        <taxon>Metazoa</taxon>
        <taxon>Chordata</taxon>
        <taxon>Craniata</taxon>
        <taxon>Vertebrata</taxon>
        <taxon>Euteleostomi</taxon>
        <taxon>Lepidosauria</taxon>
        <taxon>Squamata</taxon>
        <taxon>Bifurcata</taxon>
        <taxon>Unidentata</taxon>
        <taxon>Episquamata</taxon>
        <taxon>Toxicofera</taxon>
        <taxon>Serpentes</taxon>
        <taxon>Colubroidea</taxon>
        <taxon>Viperidae</taxon>
        <taxon>Crotalinae</taxon>
        <taxon>Deinagkistrodon</taxon>
    </lineage>
</organism>
<proteinExistence type="evidence at protein level"/>
<comment type="function">
    <text evidence="2">Is a potent glycoprotein Ibalpha (GP1BA) antagonist. Concentration-dependently inhibits botrocetin-, ristocetin- and low dose thrombin-induced platelet aggregation. Inhibits platelet adhesion only through inhibiting the vWF interaction with GP1BA, but has minimal effect on other platelet receptors, such as alpha-IIb/beta-3 (ITGA2B/ITGB3) or alpha-2/beta-1 (ITGA2/ITGB1). Causes an instant severe thrombocytopenia in rats and is not lethal to mice.</text>
</comment>
<comment type="subunit">
    <text>Heterodimer of subunits alpha and beta; disulfide-linked.</text>
</comment>
<comment type="subcellular location">
    <subcellularLocation>
        <location>Secreted</location>
    </subcellularLocation>
</comment>
<comment type="tissue specificity">
    <text>Expressed by the venom gland.</text>
</comment>
<comment type="miscellaneous">
    <text evidence="4">Negative results: lacks hemorrhagic activity in rabbits. Has no inhibitory effect on the coagulation cascade of humans. Does not agglutinate human erythrocytes of four groups (AC, BC, OC, ABK) and rabbit erythrocytes as well, which indicates it is not really a lectin (PubMed:15777951).</text>
</comment>
<comment type="similarity">
    <text evidence="3">Belongs to the snaclec family.</text>
</comment>
<name>SLCB_DEIAC</name>
<reference key="1">
    <citation type="journal article" date="2000" name="Thromb. Haemost.">
        <title>Glycoprotein Ib-binding protein from the venom of Deinagkistrodon acutus -- cDNA sequence, functional characterization, and three-dimensional modeling.</title>
        <authorList>
            <person name="Chen Y.L."/>
            <person name="Tsai K.W."/>
            <person name="Chang T."/>
            <person name="Hong T.M."/>
            <person name="Tsai I.H."/>
        </authorList>
    </citation>
    <scope>NUCLEOTIDE SEQUENCE [MRNA]</scope>
    <source>
        <tissue>Venom gland</tissue>
    </source>
</reference>
<reference key="2">
    <citation type="submission" date="2002-03" db="EMBL/GenBank/DDBJ databases">
        <title>B chain of antithrombin A from Deinagkistrodon acutus.</title>
        <authorList>
            <person name="Yu H."/>
            <person name="Xiang K."/>
            <person name="Wang Y."/>
            <person name="Liu J."/>
        </authorList>
    </citation>
    <scope>NUCLEOTIDE SEQUENCE [MRNA]</scope>
    <source>
        <tissue>Venom gland</tissue>
    </source>
</reference>
<reference key="3">
    <citation type="journal article" date="2005" name="Toxicon">
        <title>How does agkicetin-C bind on platelet glycoprotein Ibalpha and achieve its platelet effects?</title>
        <authorList>
            <person name="Xu G."/>
            <person name="Ulrichts H."/>
            <person name="Vauterin S."/>
            <person name="De Meyer S.F."/>
            <person name="Deckmyn H."/>
            <person name="Teng M."/>
            <person name="Niu L."/>
        </authorList>
    </citation>
    <scope>PROTEIN SEQUENCE OF 24-32</scope>
    <scope>FUNCTION</scope>
</reference>
<reference key="4">
    <citation type="journal article" date="2005" name="Acta Crystallogr. F">
        <title>Crystallization and preliminary X-ray crystallographic analysis of agkicetin-C from Deinagkistrodon acutus venom.</title>
        <authorList>
            <person name="Xu G."/>
            <person name="Huang Q."/>
            <person name="Teng M."/>
            <person name="Liu P."/>
            <person name="Dong Y."/>
            <person name="Niu L."/>
        </authorList>
    </citation>
    <scope>CRYSTALLIZATION</scope>
</reference>
<accession>Q9DEA1</accession>
<sequence>MGRFIFVSFGLLVVFLSLSGTGADCPPDWSSYEGNCYLVVKEKKTWAEAQKFCTEQRKECHLVSFHSAEEVDFVVSKTFPILSYDLVWIGLNNIWNDCMLEWSDGTKLTYKAWSGIPECIISKTSDNQWLSRACSRTQPFVCKFQA</sequence>